<protein>
    <recommendedName>
        <fullName evidence="1">Dual-specificity RNA methyltransferase RlmN</fullName>
        <ecNumber evidence="1">2.1.1.192</ecNumber>
    </recommendedName>
    <alternativeName>
        <fullName evidence="1">23S rRNA (adenine(2503)-C(2))-methyltransferase</fullName>
    </alternativeName>
    <alternativeName>
        <fullName evidence="1">23S rRNA m2A2503 methyltransferase</fullName>
    </alternativeName>
    <alternativeName>
        <fullName evidence="1">Ribosomal RNA large subunit methyltransferase N</fullName>
    </alternativeName>
    <alternativeName>
        <fullName evidence="1">tRNA (adenine(37)-C(2))-methyltransferase</fullName>
    </alternativeName>
    <alternativeName>
        <fullName evidence="1">tRNA m2A37 methyltransferase</fullName>
    </alternativeName>
</protein>
<dbReference type="EC" id="2.1.1.192" evidence="1"/>
<dbReference type="EMBL" id="CP000503">
    <property type="protein sequence ID" value="ABM24195.1"/>
    <property type="status" value="ALT_INIT"/>
    <property type="molecule type" value="Genomic_DNA"/>
</dbReference>
<dbReference type="RefSeq" id="WP_007646311.1">
    <property type="nucleotide sequence ID" value="NC_008750.1"/>
</dbReference>
<dbReference type="SMR" id="A1RHQ0"/>
<dbReference type="KEGG" id="shw:Sputw3181_1352"/>
<dbReference type="HOGENOM" id="CLU_029101_0_0_6"/>
<dbReference type="Proteomes" id="UP000002597">
    <property type="component" value="Chromosome"/>
</dbReference>
<dbReference type="GO" id="GO:0005737">
    <property type="term" value="C:cytoplasm"/>
    <property type="evidence" value="ECO:0007669"/>
    <property type="project" value="UniProtKB-SubCell"/>
</dbReference>
<dbReference type="GO" id="GO:0051539">
    <property type="term" value="F:4 iron, 4 sulfur cluster binding"/>
    <property type="evidence" value="ECO:0007669"/>
    <property type="project" value="UniProtKB-UniRule"/>
</dbReference>
<dbReference type="GO" id="GO:0046872">
    <property type="term" value="F:metal ion binding"/>
    <property type="evidence" value="ECO:0007669"/>
    <property type="project" value="UniProtKB-KW"/>
</dbReference>
<dbReference type="GO" id="GO:0070040">
    <property type="term" value="F:rRNA (adenine(2503)-C2-)-methyltransferase activity"/>
    <property type="evidence" value="ECO:0007669"/>
    <property type="project" value="UniProtKB-UniRule"/>
</dbReference>
<dbReference type="GO" id="GO:0019843">
    <property type="term" value="F:rRNA binding"/>
    <property type="evidence" value="ECO:0007669"/>
    <property type="project" value="UniProtKB-UniRule"/>
</dbReference>
<dbReference type="GO" id="GO:0002935">
    <property type="term" value="F:tRNA (adenine(37)-C2)-methyltransferase activity"/>
    <property type="evidence" value="ECO:0007669"/>
    <property type="project" value="UniProtKB-UniRule"/>
</dbReference>
<dbReference type="GO" id="GO:0000049">
    <property type="term" value="F:tRNA binding"/>
    <property type="evidence" value="ECO:0007669"/>
    <property type="project" value="UniProtKB-UniRule"/>
</dbReference>
<dbReference type="GO" id="GO:0070475">
    <property type="term" value="P:rRNA base methylation"/>
    <property type="evidence" value="ECO:0007669"/>
    <property type="project" value="UniProtKB-UniRule"/>
</dbReference>
<dbReference type="GO" id="GO:0030488">
    <property type="term" value="P:tRNA methylation"/>
    <property type="evidence" value="ECO:0007669"/>
    <property type="project" value="UniProtKB-UniRule"/>
</dbReference>
<dbReference type="CDD" id="cd01335">
    <property type="entry name" value="Radical_SAM"/>
    <property type="match status" value="1"/>
</dbReference>
<dbReference type="FunFam" id="1.10.150.530:FF:000003">
    <property type="entry name" value="Dual-specificity RNA methyltransferase RlmN"/>
    <property type="match status" value="1"/>
</dbReference>
<dbReference type="FunFam" id="3.20.20.70:FF:000008">
    <property type="entry name" value="Dual-specificity RNA methyltransferase RlmN"/>
    <property type="match status" value="1"/>
</dbReference>
<dbReference type="Gene3D" id="1.10.150.530">
    <property type="match status" value="1"/>
</dbReference>
<dbReference type="Gene3D" id="3.20.20.70">
    <property type="entry name" value="Aldolase class I"/>
    <property type="match status" value="1"/>
</dbReference>
<dbReference type="HAMAP" id="MF_01849">
    <property type="entry name" value="RNA_methyltr_RlmN"/>
    <property type="match status" value="1"/>
</dbReference>
<dbReference type="InterPro" id="IPR013785">
    <property type="entry name" value="Aldolase_TIM"/>
</dbReference>
<dbReference type="InterPro" id="IPR040072">
    <property type="entry name" value="Methyltransferase_A"/>
</dbReference>
<dbReference type="InterPro" id="IPR048641">
    <property type="entry name" value="RlmN_N"/>
</dbReference>
<dbReference type="InterPro" id="IPR027492">
    <property type="entry name" value="RNA_MTrfase_RlmN"/>
</dbReference>
<dbReference type="InterPro" id="IPR004383">
    <property type="entry name" value="rRNA_lsu_MTrfase_RlmN/Cfr"/>
</dbReference>
<dbReference type="InterPro" id="IPR007197">
    <property type="entry name" value="rSAM"/>
</dbReference>
<dbReference type="NCBIfam" id="NF008396">
    <property type="entry name" value="PRK11194.1"/>
    <property type="match status" value="1"/>
</dbReference>
<dbReference type="NCBIfam" id="TIGR00048">
    <property type="entry name" value="rRNA_mod_RlmN"/>
    <property type="match status" value="1"/>
</dbReference>
<dbReference type="PANTHER" id="PTHR30544">
    <property type="entry name" value="23S RRNA METHYLTRANSFERASE"/>
    <property type="match status" value="1"/>
</dbReference>
<dbReference type="PANTHER" id="PTHR30544:SF5">
    <property type="entry name" value="RADICAL SAM CORE DOMAIN-CONTAINING PROTEIN"/>
    <property type="match status" value="1"/>
</dbReference>
<dbReference type="Pfam" id="PF04055">
    <property type="entry name" value="Radical_SAM"/>
    <property type="match status" value="1"/>
</dbReference>
<dbReference type="Pfam" id="PF21016">
    <property type="entry name" value="RlmN_N"/>
    <property type="match status" value="1"/>
</dbReference>
<dbReference type="PIRSF" id="PIRSF006004">
    <property type="entry name" value="CHP00048"/>
    <property type="match status" value="1"/>
</dbReference>
<dbReference type="SFLD" id="SFLDF00275">
    <property type="entry name" value="adenosine_C2_methyltransferase"/>
    <property type="match status" value="1"/>
</dbReference>
<dbReference type="SFLD" id="SFLDS00029">
    <property type="entry name" value="Radical_SAM"/>
    <property type="match status" value="1"/>
</dbReference>
<dbReference type="SUPFAM" id="SSF102114">
    <property type="entry name" value="Radical SAM enzymes"/>
    <property type="match status" value="1"/>
</dbReference>
<dbReference type="PROSITE" id="PS51918">
    <property type="entry name" value="RADICAL_SAM"/>
    <property type="match status" value="1"/>
</dbReference>
<proteinExistence type="inferred from homology"/>
<sequence>MSEKKINLLDLDRKAMRALFADLGEKPFRADQLMKWIYHFGVSDFEEMTNINKVLRQKLAARCEIVAPEISSFQKSTDGTIKFAIHVGEGQEVETVYIPEDDRATLCVSSQVGCALECTFCSTAQQGFNRNLTVSEIVGQIWRVSHFLGFAKDTGDRPITNVVMMGMGEPLLNLANVIPAMDIMLDDFGFSLSKRRVTLSTSGVVPALDKLGDALDVALAVSIHAPNDELRDILVPVNKKYPLQEFLAGIRRYIAKSNANRGRVTVEYVMLDHINDSTEQAHELAKLMKDTPCKVNLIPFNPYPGSPYGRSSNSRIDRFSKVLMEYGLTVIVRKTRGDDIDAACGQLAGDIRDRTKRLAKKRMQENQISVTMN</sequence>
<name>RLMN_SHESW</name>
<feature type="chain" id="PRO_0000350407" description="Dual-specificity RNA methyltransferase RlmN">
    <location>
        <begin position="1"/>
        <end position="373"/>
    </location>
</feature>
<feature type="domain" description="Radical SAM core" evidence="2">
    <location>
        <begin position="100"/>
        <end position="339"/>
    </location>
</feature>
<feature type="active site" description="Proton acceptor" evidence="1">
    <location>
        <position position="94"/>
    </location>
</feature>
<feature type="active site" description="S-methylcysteine intermediate" evidence="1">
    <location>
        <position position="344"/>
    </location>
</feature>
<feature type="binding site" evidence="1">
    <location>
        <position position="114"/>
    </location>
    <ligand>
        <name>[4Fe-4S] cluster</name>
        <dbReference type="ChEBI" id="CHEBI:49883"/>
        <note>4Fe-4S-S-AdoMet</note>
    </ligand>
</feature>
<feature type="binding site" evidence="1">
    <location>
        <position position="118"/>
    </location>
    <ligand>
        <name>[4Fe-4S] cluster</name>
        <dbReference type="ChEBI" id="CHEBI:49883"/>
        <note>4Fe-4S-S-AdoMet</note>
    </ligand>
</feature>
<feature type="binding site" evidence="1">
    <location>
        <position position="121"/>
    </location>
    <ligand>
        <name>[4Fe-4S] cluster</name>
        <dbReference type="ChEBI" id="CHEBI:49883"/>
        <note>4Fe-4S-S-AdoMet</note>
    </ligand>
</feature>
<feature type="binding site" evidence="1">
    <location>
        <begin position="168"/>
        <end position="169"/>
    </location>
    <ligand>
        <name>S-adenosyl-L-methionine</name>
        <dbReference type="ChEBI" id="CHEBI:59789"/>
    </ligand>
</feature>
<feature type="binding site" evidence="1">
    <location>
        <position position="200"/>
    </location>
    <ligand>
        <name>S-adenosyl-L-methionine</name>
        <dbReference type="ChEBI" id="CHEBI:59789"/>
    </ligand>
</feature>
<feature type="binding site" evidence="1">
    <location>
        <begin position="222"/>
        <end position="224"/>
    </location>
    <ligand>
        <name>S-adenosyl-L-methionine</name>
        <dbReference type="ChEBI" id="CHEBI:59789"/>
    </ligand>
</feature>
<feature type="binding site" evidence="1">
    <location>
        <position position="301"/>
    </location>
    <ligand>
        <name>S-adenosyl-L-methionine</name>
        <dbReference type="ChEBI" id="CHEBI:59789"/>
    </ligand>
</feature>
<feature type="disulfide bond" description="(transient)" evidence="1">
    <location>
        <begin position="107"/>
        <end position="344"/>
    </location>
</feature>
<comment type="function">
    <text evidence="1">Specifically methylates position 2 of adenine 2503 in 23S rRNA and position 2 of adenine 37 in tRNAs. m2A2503 modification seems to play a crucial role in the proofreading step occurring at the peptidyl transferase center and thus would serve to optimize ribosomal fidelity.</text>
</comment>
<comment type="catalytic activity">
    <reaction evidence="1">
        <text>adenosine(2503) in 23S rRNA + 2 reduced [2Fe-2S]-[ferredoxin] + 2 S-adenosyl-L-methionine = 2-methyladenosine(2503) in 23S rRNA + 5'-deoxyadenosine + L-methionine + 2 oxidized [2Fe-2S]-[ferredoxin] + S-adenosyl-L-homocysteine</text>
        <dbReference type="Rhea" id="RHEA:42916"/>
        <dbReference type="Rhea" id="RHEA-COMP:10000"/>
        <dbReference type="Rhea" id="RHEA-COMP:10001"/>
        <dbReference type="Rhea" id="RHEA-COMP:10152"/>
        <dbReference type="Rhea" id="RHEA-COMP:10282"/>
        <dbReference type="ChEBI" id="CHEBI:17319"/>
        <dbReference type="ChEBI" id="CHEBI:33737"/>
        <dbReference type="ChEBI" id="CHEBI:33738"/>
        <dbReference type="ChEBI" id="CHEBI:57844"/>
        <dbReference type="ChEBI" id="CHEBI:57856"/>
        <dbReference type="ChEBI" id="CHEBI:59789"/>
        <dbReference type="ChEBI" id="CHEBI:74411"/>
        <dbReference type="ChEBI" id="CHEBI:74497"/>
        <dbReference type="EC" id="2.1.1.192"/>
    </reaction>
</comment>
<comment type="catalytic activity">
    <reaction evidence="1">
        <text>adenosine(37) in tRNA + 2 reduced [2Fe-2S]-[ferredoxin] + 2 S-adenosyl-L-methionine = 2-methyladenosine(37) in tRNA + 5'-deoxyadenosine + L-methionine + 2 oxidized [2Fe-2S]-[ferredoxin] + S-adenosyl-L-homocysteine</text>
        <dbReference type="Rhea" id="RHEA:43332"/>
        <dbReference type="Rhea" id="RHEA-COMP:10000"/>
        <dbReference type="Rhea" id="RHEA-COMP:10001"/>
        <dbReference type="Rhea" id="RHEA-COMP:10162"/>
        <dbReference type="Rhea" id="RHEA-COMP:10485"/>
        <dbReference type="ChEBI" id="CHEBI:17319"/>
        <dbReference type="ChEBI" id="CHEBI:33737"/>
        <dbReference type="ChEBI" id="CHEBI:33738"/>
        <dbReference type="ChEBI" id="CHEBI:57844"/>
        <dbReference type="ChEBI" id="CHEBI:57856"/>
        <dbReference type="ChEBI" id="CHEBI:59789"/>
        <dbReference type="ChEBI" id="CHEBI:74411"/>
        <dbReference type="ChEBI" id="CHEBI:74497"/>
        <dbReference type="EC" id="2.1.1.192"/>
    </reaction>
</comment>
<comment type="cofactor">
    <cofactor evidence="1">
        <name>[4Fe-4S] cluster</name>
        <dbReference type="ChEBI" id="CHEBI:49883"/>
    </cofactor>
    <text evidence="1">Binds 1 [4Fe-4S] cluster. The cluster is coordinated with 3 cysteines and an exchangeable S-adenosyl-L-methionine.</text>
</comment>
<comment type="subcellular location">
    <subcellularLocation>
        <location evidence="1">Cytoplasm</location>
    </subcellularLocation>
</comment>
<comment type="miscellaneous">
    <text evidence="1">Reaction proceeds by a ping-pong mechanism involving intermediate methylation of a conserved cysteine residue.</text>
</comment>
<comment type="similarity">
    <text evidence="1">Belongs to the radical SAM superfamily. RlmN family.</text>
</comment>
<comment type="sequence caution" evidence="3">
    <conflict type="erroneous initiation">
        <sequence resource="EMBL-CDS" id="ABM24195"/>
    </conflict>
</comment>
<organism>
    <name type="scientific">Shewanella sp. (strain W3-18-1)</name>
    <dbReference type="NCBI Taxonomy" id="351745"/>
    <lineage>
        <taxon>Bacteria</taxon>
        <taxon>Pseudomonadati</taxon>
        <taxon>Pseudomonadota</taxon>
        <taxon>Gammaproteobacteria</taxon>
        <taxon>Alteromonadales</taxon>
        <taxon>Shewanellaceae</taxon>
        <taxon>Shewanella</taxon>
    </lineage>
</organism>
<accession>A1RHQ0</accession>
<reference key="1">
    <citation type="submission" date="2006-12" db="EMBL/GenBank/DDBJ databases">
        <title>Complete sequence of Shewanella sp. W3-18-1.</title>
        <authorList>
            <consortium name="US DOE Joint Genome Institute"/>
            <person name="Copeland A."/>
            <person name="Lucas S."/>
            <person name="Lapidus A."/>
            <person name="Barry K."/>
            <person name="Detter J.C."/>
            <person name="Glavina del Rio T."/>
            <person name="Hammon N."/>
            <person name="Israni S."/>
            <person name="Dalin E."/>
            <person name="Tice H."/>
            <person name="Pitluck S."/>
            <person name="Chain P."/>
            <person name="Malfatti S."/>
            <person name="Shin M."/>
            <person name="Vergez L."/>
            <person name="Schmutz J."/>
            <person name="Larimer F."/>
            <person name="Land M."/>
            <person name="Hauser L."/>
            <person name="Kyrpides N."/>
            <person name="Lykidis A."/>
            <person name="Tiedje J."/>
            <person name="Richardson P."/>
        </authorList>
    </citation>
    <scope>NUCLEOTIDE SEQUENCE [LARGE SCALE GENOMIC DNA]</scope>
    <source>
        <strain>W3-18-1</strain>
    </source>
</reference>
<gene>
    <name evidence="1" type="primary">rlmN</name>
    <name type="ordered locus">Sputw3181_1352</name>
</gene>
<keyword id="KW-0004">4Fe-4S</keyword>
<keyword id="KW-0963">Cytoplasm</keyword>
<keyword id="KW-1015">Disulfide bond</keyword>
<keyword id="KW-0408">Iron</keyword>
<keyword id="KW-0411">Iron-sulfur</keyword>
<keyword id="KW-0479">Metal-binding</keyword>
<keyword id="KW-0489">Methyltransferase</keyword>
<keyword id="KW-0698">rRNA processing</keyword>
<keyword id="KW-0949">S-adenosyl-L-methionine</keyword>
<keyword id="KW-0808">Transferase</keyword>
<keyword id="KW-0819">tRNA processing</keyword>
<evidence type="ECO:0000255" key="1">
    <source>
        <dbReference type="HAMAP-Rule" id="MF_01849"/>
    </source>
</evidence>
<evidence type="ECO:0000255" key="2">
    <source>
        <dbReference type="PROSITE-ProRule" id="PRU01266"/>
    </source>
</evidence>
<evidence type="ECO:0000305" key="3"/>